<feature type="chain" id="PRO_0000429898" description="D-galactonate dehydratase family member SEN1436">
    <location>
        <begin position="1"/>
        <end position="419"/>
    </location>
</feature>
<feature type="active site" description="Proton donor/acceptor" evidence="1">
    <location>
        <position position="160"/>
    </location>
</feature>
<feature type="active site" description="Proton donor/acceptor" evidence="1">
    <location>
        <position position="227"/>
    </location>
</feature>
<feature type="binding site">
    <location>
        <position position="45"/>
    </location>
    <ligand>
        <name>substrate</name>
    </ligand>
</feature>
<feature type="binding site" evidence="1">
    <location>
        <position position="129"/>
    </location>
    <ligand>
        <name>substrate</name>
    </ligand>
</feature>
<feature type="binding site" evidence="2">
    <location>
        <position position="225"/>
    </location>
    <ligand>
        <name>Mg(2+)</name>
        <dbReference type="ChEBI" id="CHEBI:18420"/>
    </ligand>
</feature>
<feature type="binding site" evidence="2">
    <location>
        <position position="251"/>
    </location>
    <ligand>
        <name>Mg(2+)</name>
        <dbReference type="ChEBI" id="CHEBI:18420"/>
    </ligand>
</feature>
<feature type="binding site" evidence="2">
    <location>
        <position position="277"/>
    </location>
    <ligand>
        <name>Mg(2+)</name>
        <dbReference type="ChEBI" id="CHEBI:18420"/>
    </ligand>
</feature>
<feature type="binding site">
    <location>
        <position position="277"/>
    </location>
    <ligand>
        <name>substrate</name>
    </ligand>
</feature>
<feature type="binding site">
    <location>
        <position position="298"/>
    </location>
    <ligand>
        <name>substrate</name>
    </ligand>
</feature>
<feature type="binding site">
    <location>
        <position position="327"/>
    </location>
    <ligand>
        <name>substrate</name>
    </ligand>
</feature>
<feature type="binding site">
    <location>
        <position position="331"/>
    </location>
    <ligand>
        <name>substrate</name>
    </ligand>
</feature>
<feature type="binding site">
    <location>
        <position position="354"/>
    </location>
    <ligand>
        <name>substrate</name>
    </ligand>
</feature>
<feature type="site" description="Important for activity and substrate specificity; Pro is observed in family members with low D-mannonate dehydratase activity" evidence="1">
    <location>
        <position position="329"/>
    </location>
</feature>
<feature type="strand" evidence="5">
    <location>
        <begin position="8"/>
        <end position="16"/>
    </location>
</feature>
<feature type="strand" evidence="5">
    <location>
        <begin position="23"/>
        <end position="32"/>
    </location>
</feature>
<feature type="strand" evidence="5">
    <location>
        <begin position="36"/>
        <end position="40"/>
    </location>
</feature>
<feature type="helix" evidence="5">
    <location>
        <begin position="44"/>
        <end position="46"/>
    </location>
</feature>
<feature type="helix" evidence="5">
    <location>
        <begin position="47"/>
        <end position="62"/>
    </location>
</feature>
<feature type="helix" evidence="5">
    <location>
        <begin position="70"/>
        <end position="78"/>
    </location>
</feature>
<feature type="turn" evidence="5">
    <location>
        <begin position="79"/>
        <end position="81"/>
    </location>
</feature>
<feature type="helix" evidence="5">
    <location>
        <begin position="87"/>
        <end position="108"/>
    </location>
</feature>
<feature type="helix" evidence="5">
    <location>
        <begin position="112"/>
        <end position="115"/>
    </location>
</feature>
<feature type="strand" evidence="5">
    <location>
        <begin position="120"/>
        <end position="129"/>
    </location>
</feature>
<feature type="helix" evidence="5">
    <location>
        <begin position="135"/>
        <end position="148"/>
    </location>
</feature>
<feature type="strand" evidence="5">
    <location>
        <begin position="151"/>
        <end position="154"/>
    </location>
</feature>
<feature type="strand" evidence="6">
    <location>
        <begin position="157"/>
        <end position="160"/>
    </location>
</feature>
<feature type="helix" evidence="5">
    <location>
        <begin position="168"/>
        <end position="177"/>
    </location>
</feature>
<feature type="turn" evidence="5">
    <location>
        <begin position="178"/>
        <end position="180"/>
    </location>
</feature>
<feature type="strand" evidence="5">
    <location>
        <begin position="192"/>
        <end position="195"/>
    </location>
</feature>
<feature type="helix" evidence="5">
    <location>
        <begin position="198"/>
        <end position="216"/>
    </location>
</feature>
<feature type="strand" evidence="5">
    <location>
        <begin position="218"/>
        <end position="225"/>
    </location>
</feature>
<feature type="helix" evidence="5">
    <location>
        <begin position="232"/>
        <end position="242"/>
    </location>
</feature>
<feature type="helix" evidence="5">
    <location>
        <begin position="243"/>
        <end position="245"/>
    </location>
</feature>
<feature type="strand" evidence="5">
    <location>
        <begin position="248"/>
        <end position="251"/>
    </location>
</feature>
<feature type="helix" evidence="5">
    <location>
        <begin position="256"/>
        <end position="261"/>
    </location>
</feature>
<feature type="helix" evidence="5">
    <location>
        <begin position="262"/>
        <end position="268"/>
    </location>
</feature>
<feature type="strand" evidence="5">
    <location>
        <begin position="273"/>
        <end position="275"/>
    </location>
</feature>
<feature type="helix" evidence="5">
    <location>
        <begin position="282"/>
        <end position="290"/>
    </location>
</feature>
<feature type="strand" evidence="5">
    <location>
        <begin position="295"/>
        <end position="297"/>
    </location>
</feature>
<feature type="helix" evidence="5">
    <location>
        <begin position="301"/>
        <end position="304"/>
    </location>
</feature>
<feature type="helix" evidence="5">
    <location>
        <begin position="307"/>
        <end position="319"/>
    </location>
</feature>
<feature type="strand" evidence="5">
    <location>
        <begin position="330"/>
        <end position="332"/>
    </location>
</feature>
<feature type="helix" evidence="5">
    <location>
        <begin position="334"/>
        <end position="346"/>
    </location>
</feature>
<feature type="helix" evidence="5">
    <location>
        <begin position="360"/>
        <end position="365"/>
    </location>
</feature>
<feature type="strand" evidence="5">
    <location>
        <begin position="371"/>
        <end position="373"/>
    </location>
</feature>
<feature type="strand" evidence="5">
    <location>
        <begin position="376"/>
        <end position="378"/>
    </location>
</feature>
<feature type="helix" evidence="5">
    <location>
        <begin position="391"/>
        <end position="394"/>
    </location>
</feature>
<reference key="1">
    <citation type="journal article" date="2008" name="Genome Res.">
        <title>Comparative genome analysis of Salmonella enteritidis PT4 and Salmonella gallinarum 287/91 provides insights into evolutionary and host adaptation pathways.</title>
        <authorList>
            <person name="Thomson N.R."/>
            <person name="Clayton D.J."/>
            <person name="Windhorst D."/>
            <person name="Vernikos G."/>
            <person name="Davidson S."/>
            <person name="Churcher C."/>
            <person name="Quail M.A."/>
            <person name="Stevens M."/>
            <person name="Jones M.A."/>
            <person name="Watson M."/>
            <person name="Barron A."/>
            <person name="Layton A."/>
            <person name="Pickard D."/>
            <person name="Kingsley R.A."/>
            <person name="Bignell A."/>
            <person name="Clark L."/>
            <person name="Harris B."/>
            <person name="Ormond D."/>
            <person name="Abdellah Z."/>
            <person name="Brooks K."/>
            <person name="Cherevach I."/>
            <person name="Chillingworth T."/>
            <person name="Woodward J."/>
            <person name="Norberczak H."/>
            <person name="Lord A."/>
            <person name="Arrowsmith C."/>
            <person name="Jagels K."/>
            <person name="Moule S."/>
            <person name="Mungall K."/>
            <person name="Saunders M."/>
            <person name="Whitehead S."/>
            <person name="Chabalgoity J.A."/>
            <person name="Maskell D."/>
            <person name="Humphreys T."/>
            <person name="Roberts M."/>
            <person name="Barrow P.A."/>
            <person name="Dougan G."/>
            <person name="Parkhill J."/>
        </authorList>
    </citation>
    <scope>NUCLEOTIDE SEQUENCE [LARGE SCALE GENOMIC DNA]</scope>
    <source>
        <strain>P125109</strain>
    </source>
</reference>
<reference key="2">
    <citation type="journal article" date="2014" name="Biochemistry">
        <title>Discovery of function in the enolase superfamily: D-mannonate and D-gluconate dehydratases in the D-mannonate dehydratase subgroup.</title>
        <authorList>
            <person name="Wichelecki D.J."/>
            <person name="Balthazor B.M."/>
            <person name="Chau A.C."/>
            <person name="Vetting M.W."/>
            <person name="Fedorov A.A."/>
            <person name="Fedorov E.V."/>
            <person name="Lukk T."/>
            <person name="Patskovsky Y.V."/>
            <person name="Stead M.B."/>
            <person name="Hillerich B.S."/>
            <person name="Seidel R.D."/>
            <person name="Almo S.C."/>
            <person name="Gerlt J.A."/>
        </authorList>
    </citation>
    <scope>X-RAY CRYSTALLOGRAPHY (1.70 ANGSTROMS) IN COMPLEX WITH MAGNESIUM AND GLUCONATE</scope>
    <scope>FUNCTION</scope>
    <scope>COFACTOR</scope>
    <scope>CATALYTIC ACTIVITY</scope>
    <scope>SUBUNIT</scope>
    <scope>BIOPHYSICOCHEMICAL PROPERTIES</scope>
    <source>
        <strain>P125109</strain>
    </source>
</reference>
<protein>
    <recommendedName>
        <fullName>D-galactonate dehydratase family member SEN1436</fullName>
        <ecNumber>4.2.1.-</ecNumber>
    </recommendedName>
    <alternativeName>
        <fullName>D-gluconate dehydratase</fullName>
        <ecNumber>4.2.1.39</ecNumber>
    </alternativeName>
</protein>
<comment type="function">
    <text evidence="2">Has low D-gluconate dehydratase activity (in vitro), suggesting that it has no significant role in D-gluconate degradation in vivo. Has no detectable activity with a panel of 70 other acid sugars (in vitro).</text>
</comment>
<comment type="catalytic activity">
    <reaction evidence="2">
        <text>D-gluconate = 2-dehydro-3-deoxy-D-gluconate + H2O</text>
        <dbReference type="Rhea" id="RHEA:21612"/>
        <dbReference type="ChEBI" id="CHEBI:15377"/>
        <dbReference type="ChEBI" id="CHEBI:18391"/>
        <dbReference type="ChEBI" id="CHEBI:57990"/>
        <dbReference type="EC" id="4.2.1.39"/>
    </reaction>
</comment>
<comment type="cofactor">
    <cofactor evidence="2">
        <name>Mg(2+)</name>
        <dbReference type="ChEBI" id="CHEBI:18420"/>
    </cofactor>
    <text evidence="2">Binds 1 Mg(2+) ion per subunit.</text>
</comment>
<comment type="biophysicochemical properties">
    <kinetics>
        <text evidence="2">kcat is 0.04 sec(-1) with D-gluconate.</text>
    </kinetics>
</comment>
<comment type="subunit">
    <text evidence="4">Homotetramer.</text>
</comment>
<comment type="similarity">
    <text evidence="3">Belongs to the mandelate racemase/muconate lactonizing enzyme family. GalD subfamily.</text>
</comment>
<keyword id="KW-0002">3D-structure</keyword>
<keyword id="KW-0456">Lyase</keyword>
<keyword id="KW-0460">Magnesium</keyword>
<keyword id="KW-0479">Metal-binding</keyword>
<name>DGD_SALEP</name>
<sequence>MKVSNLKITNVKTILTAPGGIDLAVVKIETNEPGLYGLGCATFTQRIFAVKSAIDEYMAPFLVGKDPTRIEDIWQSGVVSGYWRNGPIMNNALSGVDMALWDIKGKLAGMPVYDLLGGKCRDGIPLYCHTDGGDEVEVEDNIRARMEEGYQYVRCQMGMYGGAGTDDLKLIATQLARAKNIQPKRSPRSKTPGIYFDPDAYAKSVPRLFDHLRNKLGFGIEFIHDVHERVTPVTAINLAKTLEQYQLFYLEDPVAPENIDWLKMLRQQSSTPISMGELFVNVNEWKPLIDNRLIDYIRCHVSTIGGITPARKLAVYSELNGVRTAWHGPGDISPVGVCANMHLDLSSPNFGIQEYTPMNDALRDVFPGCPEIDHGYAYLNDKPGLGIDIDEAKAAKYPCEGGIPSWTMARTPDGTASRP</sequence>
<dbReference type="EC" id="4.2.1.-"/>
<dbReference type="EC" id="4.2.1.39"/>
<dbReference type="EMBL" id="AM933172">
    <property type="protein sequence ID" value="CAR33015.1"/>
    <property type="molecule type" value="Genomic_DNA"/>
</dbReference>
<dbReference type="PDB" id="3TW9">
    <property type="method" value="X-ray"/>
    <property type="resolution" value="1.70 A"/>
    <property type="chains" value="A/B/C/D=1-419"/>
</dbReference>
<dbReference type="PDB" id="3TWA">
    <property type="method" value="X-ray"/>
    <property type="resolution" value="1.80 A"/>
    <property type="chains" value="A/B/C/D/E=1-419"/>
</dbReference>
<dbReference type="PDB" id="3TWB">
    <property type="method" value="X-ray"/>
    <property type="resolution" value="1.76 A"/>
    <property type="chains" value="A/B/C/D/E=1-419"/>
</dbReference>
<dbReference type="PDBsum" id="3TW9"/>
<dbReference type="PDBsum" id="3TWA"/>
<dbReference type="PDBsum" id="3TWB"/>
<dbReference type="SMR" id="B5R541"/>
<dbReference type="KEGG" id="set:SEN1436"/>
<dbReference type="HOGENOM" id="CLU_030273_6_1_6"/>
<dbReference type="EvolutionaryTrace" id="B5R541"/>
<dbReference type="Proteomes" id="UP000000613">
    <property type="component" value="Chromosome"/>
</dbReference>
<dbReference type="GO" id="GO:0047929">
    <property type="term" value="F:gluconate dehydratase activity"/>
    <property type="evidence" value="ECO:0000314"/>
    <property type="project" value="UniProtKB"/>
</dbReference>
<dbReference type="GO" id="GO:0000287">
    <property type="term" value="F:magnesium ion binding"/>
    <property type="evidence" value="ECO:0000314"/>
    <property type="project" value="UniProtKB"/>
</dbReference>
<dbReference type="GO" id="GO:0009063">
    <property type="term" value="P:amino acid catabolic process"/>
    <property type="evidence" value="ECO:0007669"/>
    <property type="project" value="InterPro"/>
</dbReference>
<dbReference type="GO" id="GO:0016052">
    <property type="term" value="P:carbohydrate catabolic process"/>
    <property type="evidence" value="ECO:0000314"/>
    <property type="project" value="UniProtKB"/>
</dbReference>
<dbReference type="FunFam" id="3.20.20.120:FF:000011">
    <property type="entry name" value="D-galactonate dehydratase family member VSWAT3_13707"/>
    <property type="match status" value="1"/>
</dbReference>
<dbReference type="Gene3D" id="3.20.20.120">
    <property type="entry name" value="Enolase-like C-terminal domain"/>
    <property type="match status" value="1"/>
</dbReference>
<dbReference type="Gene3D" id="3.30.390.10">
    <property type="entry name" value="Enolase-like, N-terminal domain"/>
    <property type="match status" value="1"/>
</dbReference>
<dbReference type="InterPro" id="IPR034593">
    <property type="entry name" value="DgoD-like"/>
</dbReference>
<dbReference type="InterPro" id="IPR036849">
    <property type="entry name" value="Enolase-like_C_sf"/>
</dbReference>
<dbReference type="InterPro" id="IPR029017">
    <property type="entry name" value="Enolase-like_N"/>
</dbReference>
<dbReference type="InterPro" id="IPR029065">
    <property type="entry name" value="Enolase_C-like"/>
</dbReference>
<dbReference type="InterPro" id="IPR018110">
    <property type="entry name" value="Mandel_Rmase/mucon_lact_enz_CS"/>
</dbReference>
<dbReference type="InterPro" id="IPR013342">
    <property type="entry name" value="Mandelate_racemase_C"/>
</dbReference>
<dbReference type="InterPro" id="IPR013341">
    <property type="entry name" value="Mandelate_racemase_N_dom"/>
</dbReference>
<dbReference type="PANTHER" id="PTHR48080">
    <property type="entry name" value="D-GALACTONATE DEHYDRATASE-RELATED"/>
    <property type="match status" value="1"/>
</dbReference>
<dbReference type="PANTHER" id="PTHR48080:SF6">
    <property type="entry name" value="STARVATION-SENSING PROTEIN RSPA"/>
    <property type="match status" value="1"/>
</dbReference>
<dbReference type="Pfam" id="PF13378">
    <property type="entry name" value="MR_MLE_C"/>
    <property type="match status" value="1"/>
</dbReference>
<dbReference type="Pfam" id="PF02746">
    <property type="entry name" value="MR_MLE_N"/>
    <property type="match status" value="1"/>
</dbReference>
<dbReference type="SMART" id="SM00922">
    <property type="entry name" value="MR_MLE"/>
    <property type="match status" value="1"/>
</dbReference>
<dbReference type="SUPFAM" id="SSF51604">
    <property type="entry name" value="Enolase C-terminal domain-like"/>
    <property type="match status" value="1"/>
</dbReference>
<dbReference type="SUPFAM" id="SSF54826">
    <property type="entry name" value="Enolase N-terminal domain-like"/>
    <property type="match status" value="1"/>
</dbReference>
<dbReference type="PROSITE" id="PS00908">
    <property type="entry name" value="MR_MLE_1"/>
    <property type="match status" value="1"/>
</dbReference>
<dbReference type="PROSITE" id="PS00909">
    <property type="entry name" value="MR_MLE_2"/>
    <property type="match status" value="1"/>
</dbReference>
<accession>B5R541</accession>
<proteinExistence type="evidence at protein level"/>
<evidence type="ECO:0000250" key="1"/>
<evidence type="ECO:0000269" key="2">
    <source>
    </source>
</evidence>
<evidence type="ECO:0000305" key="3"/>
<evidence type="ECO:0000305" key="4">
    <source>
    </source>
</evidence>
<evidence type="ECO:0007829" key="5">
    <source>
        <dbReference type="PDB" id="3TW9"/>
    </source>
</evidence>
<evidence type="ECO:0007829" key="6">
    <source>
        <dbReference type="PDB" id="3TWB"/>
    </source>
</evidence>
<gene>
    <name type="ordered locus">SEN1436</name>
</gene>
<organism>
    <name type="scientific">Salmonella enteritidis PT4 (strain P125109)</name>
    <dbReference type="NCBI Taxonomy" id="550537"/>
    <lineage>
        <taxon>Bacteria</taxon>
        <taxon>Pseudomonadati</taxon>
        <taxon>Pseudomonadota</taxon>
        <taxon>Gammaproteobacteria</taxon>
        <taxon>Enterobacterales</taxon>
        <taxon>Enterobacteriaceae</taxon>
        <taxon>Salmonella</taxon>
    </lineage>
</organism>